<keyword id="KW-0378">Hydrolase</keyword>
<keyword id="KW-0479">Metal-binding</keyword>
<keyword id="KW-0659">Purine metabolism</keyword>
<keyword id="KW-0862">Zinc</keyword>
<comment type="function">
    <text evidence="1">Catalyzes the conversion of allantoin (5-ureidohydantoin) to allantoic acid by hydrolytic cleavage of the five-member hydantoin ring.</text>
</comment>
<comment type="catalytic activity">
    <reaction evidence="1">
        <text>(S)-allantoin + H2O = allantoate + H(+)</text>
        <dbReference type="Rhea" id="RHEA:17029"/>
        <dbReference type="ChEBI" id="CHEBI:15377"/>
        <dbReference type="ChEBI" id="CHEBI:15378"/>
        <dbReference type="ChEBI" id="CHEBI:15678"/>
        <dbReference type="ChEBI" id="CHEBI:17536"/>
        <dbReference type="EC" id="3.5.2.5"/>
    </reaction>
</comment>
<comment type="cofactor">
    <cofactor evidence="1">
        <name>Zn(2+)</name>
        <dbReference type="ChEBI" id="CHEBI:29105"/>
    </cofactor>
    <text evidence="1">Binds 2 Zn(2+) ions per subunit.</text>
</comment>
<comment type="pathway">
    <text evidence="1">Nitrogen metabolism; (S)-allantoin degradation; allantoate from (S)-allantoin: step 1/1.</text>
</comment>
<comment type="subunit">
    <text evidence="1">Homotetramer.</text>
</comment>
<comment type="PTM">
    <text evidence="1">Carboxylation allows a single lysine to coordinate two zinc ions.</text>
</comment>
<comment type="similarity">
    <text evidence="1">Belongs to the metallo-dependent hydrolases superfamily. Allantoinase family.</text>
</comment>
<reference key="1">
    <citation type="journal article" date="2011" name="J. Bacteriol.">
        <title>Comparative genomics of 28 Salmonella enterica isolates: evidence for CRISPR-mediated adaptive sublineage evolution.</title>
        <authorList>
            <person name="Fricke W.F."/>
            <person name="Mammel M.K."/>
            <person name="McDermott P.F."/>
            <person name="Tartera C."/>
            <person name="White D.G."/>
            <person name="Leclerc J.E."/>
            <person name="Ravel J."/>
            <person name="Cebula T.A."/>
        </authorList>
    </citation>
    <scope>NUCLEOTIDE SEQUENCE [LARGE SCALE GENOMIC DNA]</scope>
    <source>
        <strain>SL254</strain>
    </source>
</reference>
<organism>
    <name type="scientific">Salmonella newport (strain SL254)</name>
    <dbReference type="NCBI Taxonomy" id="423368"/>
    <lineage>
        <taxon>Bacteria</taxon>
        <taxon>Pseudomonadati</taxon>
        <taxon>Pseudomonadota</taxon>
        <taxon>Gammaproteobacteria</taxon>
        <taxon>Enterobacterales</taxon>
        <taxon>Enterobacteriaceae</taxon>
        <taxon>Salmonella</taxon>
    </lineage>
</organism>
<name>ALLB_SALNS</name>
<feature type="chain" id="PRO_1000186931" description="Allantoinase">
    <location>
        <begin position="1"/>
        <end position="453"/>
    </location>
</feature>
<feature type="binding site" evidence="1">
    <location>
        <position position="59"/>
    </location>
    <ligand>
        <name>Zn(2+)</name>
        <dbReference type="ChEBI" id="CHEBI:29105"/>
        <label>1</label>
    </ligand>
</feature>
<feature type="binding site" evidence="1">
    <location>
        <position position="61"/>
    </location>
    <ligand>
        <name>Zn(2+)</name>
        <dbReference type="ChEBI" id="CHEBI:29105"/>
        <label>1</label>
    </ligand>
</feature>
<feature type="binding site" description="via carbamate group" evidence="1">
    <location>
        <position position="146"/>
    </location>
    <ligand>
        <name>Zn(2+)</name>
        <dbReference type="ChEBI" id="CHEBI:29105"/>
        <label>1</label>
    </ligand>
</feature>
<feature type="binding site" description="via carbamate group" evidence="1">
    <location>
        <position position="146"/>
    </location>
    <ligand>
        <name>Zn(2+)</name>
        <dbReference type="ChEBI" id="CHEBI:29105"/>
        <label>2</label>
    </ligand>
</feature>
<feature type="binding site" evidence="1">
    <location>
        <position position="186"/>
    </location>
    <ligand>
        <name>Zn(2+)</name>
        <dbReference type="ChEBI" id="CHEBI:29105"/>
        <label>2</label>
    </ligand>
</feature>
<feature type="binding site" evidence="1">
    <location>
        <position position="242"/>
    </location>
    <ligand>
        <name>Zn(2+)</name>
        <dbReference type="ChEBI" id="CHEBI:29105"/>
        <label>2</label>
    </ligand>
</feature>
<feature type="binding site" evidence="1">
    <location>
        <position position="315"/>
    </location>
    <ligand>
        <name>Zn(2+)</name>
        <dbReference type="ChEBI" id="CHEBI:29105"/>
        <label>1</label>
    </ligand>
</feature>
<feature type="modified residue" description="N6-carboxylysine" evidence="1">
    <location>
        <position position="146"/>
    </location>
</feature>
<proteinExistence type="inferred from homology"/>
<gene>
    <name evidence="1" type="primary">allB</name>
    <name type="ordered locus">SNSL254_A0576</name>
</gene>
<evidence type="ECO:0000255" key="1">
    <source>
        <dbReference type="HAMAP-Rule" id="MF_01645"/>
    </source>
</evidence>
<sequence>MSFDLIIKNGTVILENEARVIDIAVQGGKIAAIGENLGEAKNVLDATGLIVSPGMVDAHTHISEPGRTHWEGYETGTRAAAKGGITTMIEMPLNQLPATVDRETIELKFDAAKGKLTIDAAQLGGLVSYNLDRLHELDEVGVVGFKCFVATCGDRGIDNDFRDVNDWQFYKGAQKLGEMDQTVLVHCENALICDELGEEAKREGRVTAHDYVASRPVFTEVEAIRRVLYLAKAAGCRLHVCHISSPEGVEEVTRARQEGQDVTCESCPHYFVLDTDQFEEIGTLAKCSPPIRDQENQKGMWEKLFNGEIDCLVSDHSPCPPEMKAGNIMQAWGGIAGLQNCMDVMFDEAVQKRGMSLPMFGKLMATNAADIFGLKHKGRIAPGKDADLVFIQPDSSYVLKNEDLEYRHKVSPYVGRTIGARITKTILRGDVIYDIEHGFPVPPKGQFILKHQQ</sequence>
<accession>B4SXM8</accession>
<protein>
    <recommendedName>
        <fullName evidence="1">Allantoinase</fullName>
        <ecNumber evidence="1">3.5.2.5</ecNumber>
    </recommendedName>
    <alternativeName>
        <fullName evidence="1">Allantoin-utilizing enzyme</fullName>
    </alternativeName>
</protein>
<dbReference type="EC" id="3.5.2.5" evidence="1"/>
<dbReference type="EMBL" id="CP001113">
    <property type="protein sequence ID" value="ACF65544.1"/>
    <property type="molecule type" value="Genomic_DNA"/>
</dbReference>
<dbReference type="RefSeq" id="WP_000006865.1">
    <property type="nucleotide sequence ID" value="NZ_CCMR01000003.1"/>
</dbReference>
<dbReference type="SMR" id="B4SXM8"/>
<dbReference type="KEGG" id="see:SNSL254_A0576"/>
<dbReference type="HOGENOM" id="CLU_015572_4_2_6"/>
<dbReference type="UniPathway" id="UPA00395">
    <property type="reaction ID" value="UER00653"/>
</dbReference>
<dbReference type="Proteomes" id="UP000008824">
    <property type="component" value="Chromosome"/>
</dbReference>
<dbReference type="GO" id="GO:0005737">
    <property type="term" value="C:cytoplasm"/>
    <property type="evidence" value="ECO:0007669"/>
    <property type="project" value="TreeGrafter"/>
</dbReference>
<dbReference type="GO" id="GO:0004038">
    <property type="term" value="F:allantoinase activity"/>
    <property type="evidence" value="ECO:0007669"/>
    <property type="project" value="UniProtKB-UniRule"/>
</dbReference>
<dbReference type="GO" id="GO:0050897">
    <property type="term" value="F:cobalt ion binding"/>
    <property type="evidence" value="ECO:0007669"/>
    <property type="project" value="InterPro"/>
</dbReference>
<dbReference type="GO" id="GO:0008270">
    <property type="term" value="F:zinc ion binding"/>
    <property type="evidence" value="ECO:0007669"/>
    <property type="project" value="InterPro"/>
</dbReference>
<dbReference type="GO" id="GO:0000256">
    <property type="term" value="P:allantoin catabolic process"/>
    <property type="evidence" value="ECO:0007669"/>
    <property type="project" value="UniProtKB-UniRule"/>
</dbReference>
<dbReference type="GO" id="GO:0006145">
    <property type="term" value="P:purine nucleobase catabolic process"/>
    <property type="evidence" value="ECO:0007669"/>
    <property type="project" value="TreeGrafter"/>
</dbReference>
<dbReference type="CDD" id="cd01315">
    <property type="entry name" value="L-HYD_ALN"/>
    <property type="match status" value="1"/>
</dbReference>
<dbReference type="FunFam" id="3.20.20.140:FF:000013">
    <property type="entry name" value="Allantoinase"/>
    <property type="match status" value="1"/>
</dbReference>
<dbReference type="Gene3D" id="3.20.20.140">
    <property type="entry name" value="Metal-dependent hydrolases"/>
    <property type="match status" value="1"/>
</dbReference>
<dbReference type="HAMAP" id="MF_01645">
    <property type="entry name" value="Hydantoinase"/>
    <property type="match status" value="1"/>
</dbReference>
<dbReference type="InterPro" id="IPR017593">
    <property type="entry name" value="Allantoinase"/>
</dbReference>
<dbReference type="InterPro" id="IPR047604">
    <property type="entry name" value="Allantoinase_bact"/>
</dbReference>
<dbReference type="InterPro" id="IPR006680">
    <property type="entry name" value="Amidohydro-rel"/>
</dbReference>
<dbReference type="InterPro" id="IPR050138">
    <property type="entry name" value="DHOase/Allantoinase_Hydrolase"/>
</dbReference>
<dbReference type="InterPro" id="IPR011059">
    <property type="entry name" value="Metal-dep_hydrolase_composite"/>
</dbReference>
<dbReference type="InterPro" id="IPR032466">
    <property type="entry name" value="Metal_Hydrolase"/>
</dbReference>
<dbReference type="NCBIfam" id="TIGR03178">
    <property type="entry name" value="allantoinase"/>
    <property type="match status" value="1"/>
</dbReference>
<dbReference type="NCBIfam" id="NF005960">
    <property type="entry name" value="PRK08044.1"/>
    <property type="match status" value="1"/>
</dbReference>
<dbReference type="PANTHER" id="PTHR43668">
    <property type="entry name" value="ALLANTOINASE"/>
    <property type="match status" value="1"/>
</dbReference>
<dbReference type="PANTHER" id="PTHR43668:SF4">
    <property type="entry name" value="ALLANTOINASE"/>
    <property type="match status" value="1"/>
</dbReference>
<dbReference type="Pfam" id="PF01979">
    <property type="entry name" value="Amidohydro_1"/>
    <property type="match status" value="1"/>
</dbReference>
<dbReference type="SUPFAM" id="SSF51338">
    <property type="entry name" value="Composite domain of metallo-dependent hydrolases"/>
    <property type="match status" value="1"/>
</dbReference>
<dbReference type="SUPFAM" id="SSF51556">
    <property type="entry name" value="Metallo-dependent hydrolases"/>
    <property type="match status" value="1"/>
</dbReference>